<dbReference type="EMBL" id="AK010152">
    <property type="protein sequence ID" value="BAB26737.1"/>
    <property type="molecule type" value="mRNA"/>
</dbReference>
<dbReference type="EMBL" id="AK087456">
    <property type="protein sequence ID" value="BAC39882.1"/>
    <property type="molecule type" value="mRNA"/>
</dbReference>
<dbReference type="EMBL" id="BC002090">
    <property type="protein sequence ID" value="AAH02090.1"/>
    <property type="molecule type" value="mRNA"/>
</dbReference>
<dbReference type="CCDS" id="CCDS29462.1"/>
<dbReference type="RefSeq" id="NP_001278009.1">
    <property type="nucleotide sequence ID" value="NM_001291080.1"/>
</dbReference>
<dbReference type="RefSeq" id="NP_077138.1">
    <property type="nucleotide sequence ID" value="NM_024176.2"/>
</dbReference>
<dbReference type="SMR" id="Q9D6N5"/>
<dbReference type="BioGRID" id="211553">
    <property type="interactions" value="18"/>
</dbReference>
<dbReference type="FunCoup" id="Q9D6N5">
    <property type="interactions" value="1761"/>
</dbReference>
<dbReference type="IntAct" id="Q9D6N5">
    <property type="interactions" value="1"/>
</dbReference>
<dbReference type="MINT" id="Q9D6N5"/>
<dbReference type="STRING" id="10090.ENSMUSP00000109304"/>
<dbReference type="iPTMnet" id="Q9D6N5"/>
<dbReference type="PhosphoSitePlus" id="Q9D6N5"/>
<dbReference type="PaxDb" id="10090-ENSMUSP00000025853"/>
<dbReference type="ProteomicsDB" id="287351"/>
<dbReference type="Pumba" id="Q9D6N5"/>
<dbReference type="Antibodypedia" id="1835">
    <property type="antibodies" value="187 antibodies from 24 providers"/>
</dbReference>
<dbReference type="DNASU" id="66556"/>
<dbReference type="Ensembl" id="ENSMUST00000025853.16">
    <property type="protein sequence ID" value="ENSMUSP00000025853.10"/>
    <property type="gene ID" value="ENSMUSG00000024914.17"/>
</dbReference>
<dbReference type="GeneID" id="66556"/>
<dbReference type="KEGG" id="mmu:66556"/>
<dbReference type="UCSC" id="uc008gcy.2">
    <property type="organism name" value="mouse"/>
</dbReference>
<dbReference type="AGR" id="MGI:1913806"/>
<dbReference type="CTD" id="10589"/>
<dbReference type="MGI" id="MGI:1913806">
    <property type="gene designation" value="Drap1"/>
</dbReference>
<dbReference type="VEuPathDB" id="HostDB:ENSMUSG00000024914"/>
<dbReference type="eggNOG" id="KOG1659">
    <property type="taxonomic scope" value="Eukaryota"/>
</dbReference>
<dbReference type="GeneTree" id="ENSGT00390000012424"/>
<dbReference type="HOGENOM" id="CLU_045277_10_0_1"/>
<dbReference type="InParanoid" id="Q9D6N5"/>
<dbReference type="OMA" id="TEVEPAH"/>
<dbReference type="OrthoDB" id="653904at2759"/>
<dbReference type="PhylomeDB" id="Q9D6N5"/>
<dbReference type="TreeFam" id="TF313964"/>
<dbReference type="BioGRID-ORCS" id="66556">
    <property type="hits" value="30 hits in 83 CRISPR screens"/>
</dbReference>
<dbReference type="ChiTaRS" id="Drap1">
    <property type="organism name" value="mouse"/>
</dbReference>
<dbReference type="PRO" id="PR:Q9D6N5"/>
<dbReference type="Proteomes" id="UP000000589">
    <property type="component" value="Chromosome 19"/>
</dbReference>
<dbReference type="RNAct" id="Q9D6N5">
    <property type="molecule type" value="protein"/>
</dbReference>
<dbReference type="Bgee" id="ENSMUSG00000024914">
    <property type="expression patterns" value="Expressed in embryonic brain and 265 other cell types or tissues"/>
</dbReference>
<dbReference type="ExpressionAtlas" id="Q9D6N5">
    <property type="expression patterns" value="baseline and differential"/>
</dbReference>
<dbReference type="GO" id="GO:0005634">
    <property type="term" value="C:nucleus"/>
    <property type="evidence" value="ECO:0000314"/>
    <property type="project" value="MGI"/>
</dbReference>
<dbReference type="GO" id="GO:0003677">
    <property type="term" value="F:DNA binding"/>
    <property type="evidence" value="ECO:0007669"/>
    <property type="project" value="UniProtKB-KW"/>
</dbReference>
<dbReference type="GO" id="GO:0046982">
    <property type="term" value="F:protein heterodimerization activity"/>
    <property type="evidence" value="ECO:0007669"/>
    <property type="project" value="InterPro"/>
</dbReference>
<dbReference type="GO" id="GO:0003714">
    <property type="term" value="F:transcription corepressor activity"/>
    <property type="evidence" value="ECO:0000314"/>
    <property type="project" value="MGI"/>
</dbReference>
<dbReference type="GO" id="GO:0000122">
    <property type="term" value="P:negative regulation of transcription by RNA polymerase II"/>
    <property type="evidence" value="ECO:0000314"/>
    <property type="project" value="MGI"/>
</dbReference>
<dbReference type="CDD" id="cd22906">
    <property type="entry name" value="HFD_DRAP1"/>
    <property type="match status" value="1"/>
</dbReference>
<dbReference type="FunFam" id="1.10.20.10:FF:000032">
    <property type="entry name" value="dr1-associated corepressor isoform X1"/>
    <property type="match status" value="1"/>
</dbReference>
<dbReference type="Gene3D" id="1.10.20.10">
    <property type="entry name" value="Histone, subunit A"/>
    <property type="match status" value="1"/>
</dbReference>
<dbReference type="InterPro" id="IPR003958">
    <property type="entry name" value="CBFA_NFYB_domain"/>
</dbReference>
<dbReference type="InterPro" id="IPR009072">
    <property type="entry name" value="Histone-fold"/>
</dbReference>
<dbReference type="InterPro" id="IPR050568">
    <property type="entry name" value="Transcr_DNA_Rep_Reg"/>
</dbReference>
<dbReference type="PANTHER" id="PTHR10252:SF5">
    <property type="entry name" value="DR1-ASSOCIATED COREPRESSOR"/>
    <property type="match status" value="1"/>
</dbReference>
<dbReference type="PANTHER" id="PTHR10252">
    <property type="entry name" value="HISTONE-LIKE TRANSCRIPTION FACTOR CCAAT-RELATED"/>
    <property type="match status" value="1"/>
</dbReference>
<dbReference type="Pfam" id="PF00808">
    <property type="entry name" value="CBFD_NFYB_HMF"/>
    <property type="match status" value="1"/>
</dbReference>
<dbReference type="SUPFAM" id="SSF47113">
    <property type="entry name" value="Histone-fold"/>
    <property type="match status" value="1"/>
</dbReference>
<reference key="1">
    <citation type="journal article" date="2005" name="Science">
        <title>The transcriptional landscape of the mammalian genome.</title>
        <authorList>
            <person name="Carninci P."/>
            <person name="Kasukawa T."/>
            <person name="Katayama S."/>
            <person name="Gough J."/>
            <person name="Frith M.C."/>
            <person name="Maeda N."/>
            <person name="Oyama R."/>
            <person name="Ravasi T."/>
            <person name="Lenhard B."/>
            <person name="Wells C."/>
            <person name="Kodzius R."/>
            <person name="Shimokawa K."/>
            <person name="Bajic V.B."/>
            <person name="Brenner S.E."/>
            <person name="Batalov S."/>
            <person name="Forrest A.R."/>
            <person name="Zavolan M."/>
            <person name="Davis M.J."/>
            <person name="Wilming L.G."/>
            <person name="Aidinis V."/>
            <person name="Allen J.E."/>
            <person name="Ambesi-Impiombato A."/>
            <person name="Apweiler R."/>
            <person name="Aturaliya R.N."/>
            <person name="Bailey T.L."/>
            <person name="Bansal M."/>
            <person name="Baxter L."/>
            <person name="Beisel K.W."/>
            <person name="Bersano T."/>
            <person name="Bono H."/>
            <person name="Chalk A.M."/>
            <person name="Chiu K.P."/>
            <person name="Choudhary V."/>
            <person name="Christoffels A."/>
            <person name="Clutterbuck D.R."/>
            <person name="Crowe M.L."/>
            <person name="Dalla E."/>
            <person name="Dalrymple B.P."/>
            <person name="de Bono B."/>
            <person name="Della Gatta G."/>
            <person name="di Bernardo D."/>
            <person name="Down T."/>
            <person name="Engstrom P."/>
            <person name="Fagiolini M."/>
            <person name="Faulkner G."/>
            <person name="Fletcher C.F."/>
            <person name="Fukushima T."/>
            <person name="Furuno M."/>
            <person name="Futaki S."/>
            <person name="Gariboldi M."/>
            <person name="Georgii-Hemming P."/>
            <person name="Gingeras T.R."/>
            <person name="Gojobori T."/>
            <person name="Green R.E."/>
            <person name="Gustincich S."/>
            <person name="Harbers M."/>
            <person name="Hayashi Y."/>
            <person name="Hensch T.K."/>
            <person name="Hirokawa N."/>
            <person name="Hill D."/>
            <person name="Huminiecki L."/>
            <person name="Iacono M."/>
            <person name="Ikeo K."/>
            <person name="Iwama A."/>
            <person name="Ishikawa T."/>
            <person name="Jakt M."/>
            <person name="Kanapin A."/>
            <person name="Katoh M."/>
            <person name="Kawasawa Y."/>
            <person name="Kelso J."/>
            <person name="Kitamura H."/>
            <person name="Kitano H."/>
            <person name="Kollias G."/>
            <person name="Krishnan S.P."/>
            <person name="Kruger A."/>
            <person name="Kummerfeld S.K."/>
            <person name="Kurochkin I.V."/>
            <person name="Lareau L.F."/>
            <person name="Lazarevic D."/>
            <person name="Lipovich L."/>
            <person name="Liu J."/>
            <person name="Liuni S."/>
            <person name="McWilliam S."/>
            <person name="Madan Babu M."/>
            <person name="Madera M."/>
            <person name="Marchionni L."/>
            <person name="Matsuda H."/>
            <person name="Matsuzawa S."/>
            <person name="Miki H."/>
            <person name="Mignone F."/>
            <person name="Miyake S."/>
            <person name="Morris K."/>
            <person name="Mottagui-Tabar S."/>
            <person name="Mulder N."/>
            <person name="Nakano N."/>
            <person name="Nakauchi H."/>
            <person name="Ng P."/>
            <person name="Nilsson R."/>
            <person name="Nishiguchi S."/>
            <person name="Nishikawa S."/>
            <person name="Nori F."/>
            <person name="Ohara O."/>
            <person name="Okazaki Y."/>
            <person name="Orlando V."/>
            <person name="Pang K.C."/>
            <person name="Pavan W.J."/>
            <person name="Pavesi G."/>
            <person name="Pesole G."/>
            <person name="Petrovsky N."/>
            <person name="Piazza S."/>
            <person name="Reed J."/>
            <person name="Reid J.F."/>
            <person name="Ring B.Z."/>
            <person name="Ringwald M."/>
            <person name="Rost B."/>
            <person name="Ruan Y."/>
            <person name="Salzberg S.L."/>
            <person name="Sandelin A."/>
            <person name="Schneider C."/>
            <person name="Schoenbach C."/>
            <person name="Sekiguchi K."/>
            <person name="Semple C.A."/>
            <person name="Seno S."/>
            <person name="Sessa L."/>
            <person name="Sheng Y."/>
            <person name="Shibata Y."/>
            <person name="Shimada H."/>
            <person name="Shimada K."/>
            <person name="Silva D."/>
            <person name="Sinclair B."/>
            <person name="Sperling S."/>
            <person name="Stupka E."/>
            <person name="Sugiura K."/>
            <person name="Sultana R."/>
            <person name="Takenaka Y."/>
            <person name="Taki K."/>
            <person name="Tammoja K."/>
            <person name="Tan S.L."/>
            <person name="Tang S."/>
            <person name="Taylor M.S."/>
            <person name="Tegner J."/>
            <person name="Teichmann S.A."/>
            <person name="Ueda H.R."/>
            <person name="van Nimwegen E."/>
            <person name="Verardo R."/>
            <person name="Wei C.L."/>
            <person name="Yagi K."/>
            <person name="Yamanishi H."/>
            <person name="Zabarovsky E."/>
            <person name="Zhu S."/>
            <person name="Zimmer A."/>
            <person name="Hide W."/>
            <person name="Bult C."/>
            <person name="Grimmond S.M."/>
            <person name="Teasdale R.D."/>
            <person name="Liu E.T."/>
            <person name="Brusic V."/>
            <person name="Quackenbush J."/>
            <person name="Wahlestedt C."/>
            <person name="Mattick J.S."/>
            <person name="Hume D.A."/>
            <person name="Kai C."/>
            <person name="Sasaki D."/>
            <person name="Tomaru Y."/>
            <person name="Fukuda S."/>
            <person name="Kanamori-Katayama M."/>
            <person name="Suzuki M."/>
            <person name="Aoki J."/>
            <person name="Arakawa T."/>
            <person name="Iida J."/>
            <person name="Imamura K."/>
            <person name="Itoh M."/>
            <person name="Kato T."/>
            <person name="Kawaji H."/>
            <person name="Kawagashira N."/>
            <person name="Kawashima T."/>
            <person name="Kojima M."/>
            <person name="Kondo S."/>
            <person name="Konno H."/>
            <person name="Nakano K."/>
            <person name="Ninomiya N."/>
            <person name="Nishio T."/>
            <person name="Okada M."/>
            <person name="Plessy C."/>
            <person name="Shibata K."/>
            <person name="Shiraki T."/>
            <person name="Suzuki S."/>
            <person name="Tagami M."/>
            <person name="Waki K."/>
            <person name="Watahiki A."/>
            <person name="Okamura-Oho Y."/>
            <person name="Suzuki H."/>
            <person name="Kawai J."/>
            <person name="Hayashizaki Y."/>
        </authorList>
    </citation>
    <scope>NUCLEOTIDE SEQUENCE [LARGE SCALE MRNA]</scope>
    <source>
        <strain>C57BL/6J</strain>
        <tissue>Eye</tissue>
        <tissue>Tongue</tissue>
    </source>
</reference>
<reference key="2">
    <citation type="journal article" date="2004" name="Genome Res.">
        <title>The status, quality, and expansion of the NIH full-length cDNA project: the Mammalian Gene Collection (MGC).</title>
        <authorList>
            <consortium name="The MGC Project Team"/>
        </authorList>
    </citation>
    <scope>NUCLEOTIDE SEQUENCE [LARGE SCALE MRNA]</scope>
    <source>
        <strain>FVB/N</strain>
        <tissue>Mammary tumor</tissue>
    </source>
</reference>
<reference key="3">
    <citation type="journal article" date="2010" name="Cell">
        <title>A tissue-specific atlas of mouse protein phosphorylation and expression.</title>
        <authorList>
            <person name="Huttlin E.L."/>
            <person name="Jedrychowski M.P."/>
            <person name="Elias J.E."/>
            <person name="Goswami T."/>
            <person name="Rad R."/>
            <person name="Beausoleil S.A."/>
            <person name="Villen J."/>
            <person name="Haas W."/>
            <person name="Sowa M.E."/>
            <person name="Gygi S.P."/>
        </authorList>
    </citation>
    <scope>IDENTIFICATION BY MASS SPECTROMETRY [LARGE SCALE ANALYSIS]</scope>
    <source>
        <tissue>Brain</tissue>
        <tissue>Heart</tissue>
        <tissue>Kidney</tissue>
        <tissue>Lung</tissue>
        <tissue>Spleen</tissue>
        <tissue>Testis</tissue>
    </source>
</reference>
<comment type="function">
    <text evidence="1">The association of the DR1/DRAP1 heterodimer with TBP results in a functional repression of both activated and basal transcription of class II genes. This interaction precludes the formation of a transcription-competent complex by inhibiting the association of TFIIA and/or TFIIB with TBP. Can bind to DNA on its own (By similarity).</text>
</comment>
<comment type="subunit">
    <text evidence="1">Heterodimer with DR1. Binds BTAF1 (By similarity).</text>
</comment>
<comment type="subcellular location">
    <subcellularLocation>
        <location evidence="3">Nucleus</location>
    </subcellularLocation>
</comment>
<comment type="PTM">
    <text evidence="1">Phosphorylation reduces DNA binding, but has no effect on heterodimerization and TBP binding.</text>
</comment>
<comment type="similarity">
    <text evidence="3">Belongs to the NC2 alpha/DRAP1 family.</text>
</comment>
<name>NC2A_MOUSE</name>
<gene>
    <name type="primary">Drap1</name>
</gene>
<organism>
    <name type="scientific">Mus musculus</name>
    <name type="common">Mouse</name>
    <dbReference type="NCBI Taxonomy" id="10090"/>
    <lineage>
        <taxon>Eukaryota</taxon>
        <taxon>Metazoa</taxon>
        <taxon>Chordata</taxon>
        <taxon>Craniata</taxon>
        <taxon>Vertebrata</taxon>
        <taxon>Euteleostomi</taxon>
        <taxon>Mammalia</taxon>
        <taxon>Eutheria</taxon>
        <taxon>Euarchontoglires</taxon>
        <taxon>Glires</taxon>
        <taxon>Rodentia</taxon>
        <taxon>Myomorpha</taxon>
        <taxon>Muroidea</taxon>
        <taxon>Muridae</taxon>
        <taxon>Murinae</taxon>
        <taxon>Mus</taxon>
        <taxon>Mus</taxon>
    </lineage>
</organism>
<protein>
    <recommendedName>
        <fullName>Dr1-associated corepressor</fullName>
    </recommendedName>
    <alternativeName>
        <fullName>Dr1-associated protein 1</fullName>
    </alternativeName>
    <alternativeName>
        <fullName>Negative cofactor 2-alpha</fullName>
        <shortName>NC2-alpha</shortName>
    </alternativeName>
</protein>
<feature type="chain" id="PRO_0000080002" description="Dr1-associated corepressor">
    <location>
        <begin position="1"/>
        <end position="205"/>
    </location>
</feature>
<feature type="domain" description="Histone-fold">
    <location>
        <begin position="14"/>
        <end position="77"/>
    </location>
</feature>
<feature type="region of interest" description="Disordered" evidence="2">
    <location>
        <begin position="91"/>
        <end position="205"/>
    </location>
</feature>
<feature type="compositionally biased region" description="Basic and acidic residues" evidence="2">
    <location>
        <begin position="98"/>
        <end position="108"/>
    </location>
</feature>
<feature type="compositionally biased region" description="Acidic residues" evidence="2">
    <location>
        <begin position="138"/>
        <end position="155"/>
    </location>
</feature>
<feature type="compositionally biased region" description="Pro residues" evidence="2">
    <location>
        <begin position="172"/>
        <end position="192"/>
    </location>
</feature>
<feature type="compositionally biased region" description="Acidic residues" evidence="2">
    <location>
        <begin position="196"/>
        <end position="205"/>
    </location>
</feature>
<sequence>MPSKKKKYNARFPPARIKKIMQTDEEIGKVAAAVPVIISRALELFLESLLKKACQVTQSRNAKTMTTSHLKQCIELEQQFDFLKDLVASVPDMQGDGEDNHVDGDKGPRRGRKPGSSGRKNGGTGSKGKDKKLSGTDSEQEDESEDTDTDGEEETPQLPPQASHPPAHFQSPPTPFIPFTSPLPLPPAPPGPSAADAEDEEDYDS</sequence>
<evidence type="ECO:0000250" key="1"/>
<evidence type="ECO:0000256" key="2">
    <source>
        <dbReference type="SAM" id="MobiDB-lite"/>
    </source>
</evidence>
<evidence type="ECO:0000305" key="3"/>
<proteinExistence type="evidence at protein level"/>
<keyword id="KW-0238">DNA-binding</keyword>
<keyword id="KW-0539">Nucleus</keyword>
<keyword id="KW-0597">Phosphoprotein</keyword>
<keyword id="KW-1185">Reference proteome</keyword>
<keyword id="KW-0678">Repressor</keyword>
<keyword id="KW-0804">Transcription</keyword>
<keyword id="KW-0805">Transcription regulation</keyword>
<accession>Q9D6N5</accession>